<gene>
    <name evidence="1" type="primary">sucC</name>
    <name type="ordered locus">Wbm0520</name>
</gene>
<dbReference type="EC" id="6.2.1.5" evidence="1"/>
<dbReference type="EMBL" id="AE017321">
    <property type="protein sequence ID" value="AAW71108.1"/>
    <property type="molecule type" value="Genomic_DNA"/>
</dbReference>
<dbReference type="RefSeq" id="WP_011256718.1">
    <property type="nucleotide sequence ID" value="NC_006833.1"/>
</dbReference>
<dbReference type="SMR" id="Q5GSB6"/>
<dbReference type="STRING" id="292805.Wbm0520"/>
<dbReference type="KEGG" id="wbm:Wbm0520"/>
<dbReference type="eggNOG" id="COG0045">
    <property type="taxonomic scope" value="Bacteria"/>
</dbReference>
<dbReference type="HOGENOM" id="CLU_037430_0_2_5"/>
<dbReference type="UniPathway" id="UPA00223">
    <property type="reaction ID" value="UER00999"/>
</dbReference>
<dbReference type="Proteomes" id="UP000000534">
    <property type="component" value="Chromosome"/>
</dbReference>
<dbReference type="GO" id="GO:0005829">
    <property type="term" value="C:cytosol"/>
    <property type="evidence" value="ECO:0007669"/>
    <property type="project" value="TreeGrafter"/>
</dbReference>
<dbReference type="GO" id="GO:0042709">
    <property type="term" value="C:succinate-CoA ligase complex"/>
    <property type="evidence" value="ECO:0007669"/>
    <property type="project" value="TreeGrafter"/>
</dbReference>
<dbReference type="GO" id="GO:0005524">
    <property type="term" value="F:ATP binding"/>
    <property type="evidence" value="ECO:0007669"/>
    <property type="project" value="UniProtKB-UniRule"/>
</dbReference>
<dbReference type="GO" id="GO:0000287">
    <property type="term" value="F:magnesium ion binding"/>
    <property type="evidence" value="ECO:0007669"/>
    <property type="project" value="UniProtKB-UniRule"/>
</dbReference>
<dbReference type="GO" id="GO:0004775">
    <property type="term" value="F:succinate-CoA ligase (ADP-forming) activity"/>
    <property type="evidence" value="ECO:0007669"/>
    <property type="project" value="UniProtKB-UniRule"/>
</dbReference>
<dbReference type="GO" id="GO:0004776">
    <property type="term" value="F:succinate-CoA ligase (GDP-forming) activity"/>
    <property type="evidence" value="ECO:0007669"/>
    <property type="project" value="RHEA"/>
</dbReference>
<dbReference type="GO" id="GO:0006104">
    <property type="term" value="P:succinyl-CoA metabolic process"/>
    <property type="evidence" value="ECO:0007669"/>
    <property type="project" value="TreeGrafter"/>
</dbReference>
<dbReference type="GO" id="GO:0006099">
    <property type="term" value="P:tricarboxylic acid cycle"/>
    <property type="evidence" value="ECO:0007669"/>
    <property type="project" value="UniProtKB-UniRule"/>
</dbReference>
<dbReference type="FunFam" id="3.30.1490.20:FF:000002">
    <property type="entry name" value="Succinate--CoA ligase [ADP-forming] subunit beta"/>
    <property type="match status" value="1"/>
</dbReference>
<dbReference type="FunFam" id="3.30.470.20:FF:000002">
    <property type="entry name" value="Succinate--CoA ligase [ADP-forming] subunit beta"/>
    <property type="match status" value="1"/>
</dbReference>
<dbReference type="FunFam" id="3.40.50.261:FF:000001">
    <property type="entry name" value="Succinate--CoA ligase [ADP-forming] subunit beta"/>
    <property type="match status" value="1"/>
</dbReference>
<dbReference type="Gene3D" id="3.30.1490.20">
    <property type="entry name" value="ATP-grasp fold, A domain"/>
    <property type="match status" value="1"/>
</dbReference>
<dbReference type="Gene3D" id="3.30.470.20">
    <property type="entry name" value="ATP-grasp fold, B domain"/>
    <property type="match status" value="1"/>
</dbReference>
<dbReference type="Gene3D" id="3.40.50.261">
    <property type="entry name" value="Succinyl-CoA synthetase domains"/>
    <property type="match status" value="1"/>
</dbReference>
<dbReference type="HAMAP" id="MF_00558">
    <property type="entry name" value="Succ_CoA_beta"/>
    <property type="match status" value="1"/>
</dbReference>
<dbReference type="InterPro" id="IPR011761">
    <property type="entry name" value="ATP-grasp"/>
</dbReference>
<dbReference type="InterPro" id="IPR013650">
    <property type="entry name" value="ATP-grasp_succ-CoA_synth-type"/>
</dbReference>
<dbReference type="InterPro" id="IPR013815">
    <property type="entry name" value="ATP_grasp_subdomain_1"/>
</dbReference>
<dbReference type="InterPro" id="IPR017866">
    <property type="entry name" value="Succ-CoA_synthase_bsu_CS"/>
</dbReference>
<dbReference type="InterPro" id="IPR005811">
    <property type="entry name" value="SUCC_ACL_C"/>
</dbReference>
<dbReference type="InterPro" id="IPR005809">
    <property type="entry name" value="Succ_CoA_ligase-like_bsu"/>
</dbReference>
<dbReference type="InterPro" id="IPR016102">
    <property type="entry name" value="Succinyl-CoA_synth-like"/>
</dbReference>
<dbReference type="NCBIfam" id="NF001913">
    <property type="entry name" value="PRK00696.1"/>
    <property type="match status" value="1"/>
</dbReference>
<dbReference type="NCBIfam" id="TIGR01016">
    <property type="entry name" value="sucCoAbeta"/>
    <property type="match status" value="1"/>
</dbReference>
<dbReference type="PANTHER" id="PTHR11815:SF10">
    <property type="entry name" value="SUCCINATE--COA LIGASE [GDP-FORMING] SUBUNIT BETA, MITOCHONDRIAL"/>
    <property type="match status" value="1"/>
</dbReference>
<dbReference type="PANTHER" id="PTHR11815">
    <property type="entry name" value="SUCCINYL-COA SYNTHETASE BETA CHAIN"/>
    <property type="match status" value="1"/>
</dbReference>
<dbReference type="Pfam" id="PF08442">
    <property type="entry name" value="ATP-grasp_2"/>
    <property type="match status" value="1"/>
</dbReference>
<dbReference type="Pfam" id="PF00549">
    <property type="entry name" value="Ligase_CoA"/>
    <property type="match status" value="1"/>
</dbReference>
<dbReference type="PIRSF" id="PIRSF001554">
    <property type="entry name" value="SucCS_beta"/>
    <property type="match status" value="1"/>
</dbReference>
<dbReference type="SUPFAM" id="SSF56059">
    <property type="entry name" value="Glutathione synthetase ATP-binding domain-like"/>
    <property type="match status" value="1"/>
</dbReference>
<dbReference type="SUPFAM" id="SSF52210">
    <property type="entry name" value="Succinyl-CoA synthetase domains"/>
    <property type="match status" value="1"/>
</dbReference>
<dbReference type="PROSITE" id="PS50975">
    <property type="entry name" value="ATP_GRASP"/>
    <property type="match status" value="1"/>
</dbReference>
<dbReference type="PROSITE" id="PS01217">
    <property type="entry name" value="SUCCINYL_COA_LIG_3"/>
    <property type="match status" value="1"/>
</dbReference>
<evidence type="ECO:0000255" key="1">
    <source>
        <dbReference type="HAMAP-Rule" id="MF_00558"/>
    </source>
</evidence>
<organism>
    <name type="scientific">Wolbachia sp. subsp. Brugia malayi (strain TRS)</name>
    <dbReference type="NCBI Taxonomy" id="292805"/>
    <lineage>
        <taxon>Bacteria</taxon>
        <taxon>Pseudomonadati</taxon>
        <taxon>Pseudomonadota</taxon>
        <taxon>Alphaproteobacteria</taxon>
        <taxon>Rickettsiales</taxon>
        <taxon>Anaplasmataceae</taxon>
        <taxon>Wolbachieae</taxon>
        <taxon>Wolbachia</taxon>
    </lineage>
</organism>
<proteinExistence type="inferred from homology"/>
<name>SUCC_WOLTR</name>
<feature type="chain" id="PRO_1000082260" description="Succinate--CoA ligase [ADP-forming] subunit beta">
    <location>
        <begin position="1"/>
        <end position="386"/>
    </location>
</feature>
<feature type="domain" description="ATP-grasp" evidence="1">
    <location>
        <begin position="9"/>
        <end position="244"/>
    </location>
</feature>
<feature type="binding site" evidence="1">
    <location>
        <position position="46"/>
    </location>
    <ligand>
        <name>ATP</name>
        <dbReference type="ChEBI" id="CHEBI:30616"/>
    </ligand>
</feature>
<feature type="binding site" evidence="1">
    <location>
        <begin position="53"/>
        <end position="55"/>
    </location>
    <ligand>
        <name>ATP</name>
        <dbReference type="ChEBI" id="CHEBI:30616"/>
    </ligand>
</feature>
<feature type="binding site" evidence="1">
    <location>
        <position position="99"/>
    </location>
    <ligand>
        <name>ATP</name>
        <dbReference type="ChEBI" id="CHEBI:30616"/>
    </ligand>
</feature>
<feature type="binding site" evidence="1">
    <location>
        <position position="102"/>
    </location>
    <ligand>
        <name>ATP</name>
        <dbReference type="ChEBI" id="CHEBI:30616"/>
    </ligand>
</feature>
<feature type="binding site" evidence="1">
    <location>
        <position position="107"/>
    </location>
    <ligand>
        <name>ATP</name>
        <dbReference type="ChEBI" id="CHEBI:30616"/>
    </ligand>
</feature>
<feature type="binding site" evidence="1">
    <location>
        <position position="199"/>
    </location>
    <ligand>
        <name>Mg(2+)</name>
        <dbReference type="ChEBI" id="CHEBI:18420"/>
    </ligand>
</feature>
<feature type="binding site" evidence="1">
    <location>
        <position position="213"/>
    </location>
    <ligand>
        <name>Mg(2+)</name>
        <dbReference type="ChEBI" id="CHEBI:18420"/>
    </ligand>
</feature>
<feature type="binding site" evidence="1">
    <location>
        <position position="264"/>
    </location>
    <ligand>
        <name>substrate</name>
        <note>ligand shared with subunit alpha</note>
    </ligand>
</feature>
<feature type="binding site" evidence="1">
    <location>
        <begin position="321"/>
        <end position="323"/>
    </location>
    <ligand>
        <name>substrate</name>
        <note>ligand shared with subunit alpha</note>
    </ligand>
</feature>
<reference key="1">
    <citation type="journal article" date="2005" name="PLoS Biol.">
        <title>The Wolbachia genome of Brugia malayi: endosymbiont evolution within a human pathogenic nematode.</title>
        <authorList>
            <person name="Foster J."/>
            <person name="Ganatra M."/>
            <person name="Kamal I."/>
            <person name="Ware J."/>
            <person name="Makarova K."/>
            <person name="Ivanova N."/>
            <person name="Bhattacharyya A."/>
            <person name="Kapatral V."/>
            <person name="Kumar S."/>
            <person name="Posfai J."/>
            <person name="Vincze T."/>
            <person name="Ingram J."/>
            <person name="Moran L."/>
            <person name="Lapidus A."/>
            <person name="Omelchenko M."/>
            <person name="Kyrpides N."/>
            <person name="Ghedin E."/>
            <person name="Wang S."/>
            <person name="Goltsman E."/>
            <person name="Joukov V."/>
            <person name="Ostrovskaya O."/>
            <person name="Tsukerman K."/>
            <person name="Mazur M."/>
            <person name="Comb D."/>
            <person name="Koonin E."/>
            <person name="Slatko B."/>
        </authorList>
    </citation>
    <scope>NUCLEOTIDE SEQUENCE [LARGE SCALE GENOMIC DNA]</scope>
    <source>
        <strain>TRS</strain>
    </source>
</reference>
<protein>
    <recommendedName>
        <fullName evidence="1">Succinate--CoA ligase [ADP-forming] subunit beta</fullName>
        <ecNumber evidence="1">6.2.1.5</ecNumber>
    </recommendedName>
    <alternativeName>
        <fullName evidence="1">Succinyl-CoA synthetase subunit beta</fullName>
        <shortName evidence="1">SCS-beta</shortName>
    </alternativeName>
</protein>
<keyword id="KW-0067">ATP-binding</keyword>
<keyword id="KW-0436">Ligase</keyword>
<keyword id="KW-0460">Magnesium</keyword>
<keyword id="KW-0479">Metal-binding</keyword>
<keyword id="KW-0547">Nucleotide-binding</keyword>
<keyword id="KW-1185">Reference proteome</keyword>
<keyword id="KW-0816">Tricarboxylic acid cycle</keyword>
<accession>Q5GSB6</accession>
<comment type="function">
    <text evidence="1">Succinyl-CoA synthetase functions in the citric acid cycle (TCA), coupling the hydrolysis of succinyl-CoA to the synthesis of either ATP or GTP and thus represents the only step of substrate-level phosphorylation in the TCA. The beta subunit provides nucleotide specificity of the enzyme and binds the substrate succinate, while the binding sites for coenzyme A and phosphate are found in the alpha subunit.</text>
</comment>
<comment type="catalytic activity">
    <reaction evidence="1">
        <text>succinate + ATP + CoA = succinyl-CoA + ADP + phosphate</text>
        <dbReference type="Rhea" id="RHEA:17661"/>
        <dbReference type="ChEBI" id="CHEBI:30031"/>
        <dbReference type="ChEBI" id="CHEBI:30616"/>
        <dbReference type="ChEBI" id="CHEBI:43474"/>
        <dbReference type="ChEBI" id="CHEBI:57287"/>
        <dbReference type="ChEBI" id="CHEBI:57292"/>
        <dbReference type="ChEBI" id="CHEBI:456216"/>
        <dbReference type="EC" id="6.2.1.5"/>
    </reaction>
    <physiologicalReaction direction="right-to-left" evidence="1">
        <dbReference type="Rhea" id="RHEA:17663"/>
    </physiologicalReaction>
</comment>
<comment type="catalytic activity">
    <reaction evidence="1">
        <text>GTP + succinate + CoA = succinyl-CoA + GDP + phosphate</text>
        <dbReference type="Rhea" id="RHEA:22120"/>
        <dbReference type="ChEBI" id="CHEBI:30031"/>
        <dbReference type="ChEBI" id="CHEBI:37565"/>
        <dbReference type="ChEBI" id="CHEBI:43474"/>
        <dbReference type="ChEBI" id="CHEBI:57287"/>
        <dbReference type="ChEBI" id="CHEBI:57292"/>
        <dbReference type="ChEBI" id="CHEBI:58189"/>
    </reaction>
    <physiologicalReaction direction="right-to-left" evidence="1">
        <dbReference type="Rhea" id="RHEA:22122"/>
    </physiologicalReaction>
</comment>
<comment type="cofactor">
    <cofactor evidence="1">
        <name>Mg(2+)</name>
        <dbReference type="ChEBI" id="CHEBI:18420"/>
    </cofactor>
    <text evidence="1">Binds 1 Mg(2+) ion per subunit.</text>
</comment>
<comment type="pathway">
    <text evidence="1">Carbohydrate metabolism; tricarboxylic acid cycle; succinate from succinyl-CoA (ligase route): step 1/1.</text>
</comment>
<comment type="subunit">
    <text evidence="1">Heterotetramer of two alpha and two beta subunits.</text>
</comment>
<comment type="similarity">
    <text evidence="1">Belongs to the succinate/malate CoA ligase beta subunit family.</text>
</comment>
<sequence length="386" mass="42186">MNIHEYQAKEILHKFNVPVPKGFVAMSAEEAETKINQLKSDVLVVKAQIHAGGRGKAGGVKLAKSAEEAQQFVKGMLGITLVTHQTGPNGQQVRRVYIEEGSSIKKEYYLSIVIDPKLSRPAFIFSSEGGMDIEEVAKNFPTKIVKLDIDYAADFASFDSRKLSNIFNLSPEQIEKITNVAKNIYDTFIATDANQIEINPLVETNSGDFIALDAKISFDDNALYRHPEIVELRDYDEEVKEEIEASKHGLSYIKMDGNIGCMVNGAGLAMATMDIIKYYGAEPANFLDVGGGASKETVTEAFKIILSDSNVKGILVNIFGGIMRCDIIASGIVEAAKGMSIKVPLVVRLSGTNFEKGKRILEESGLNIIAADELDEAAQKIVKEVE</sequence>